<gene>
    <name evidence="1" type="primary">chdC</name>
    <name type="ordered locus">BCE_5517</name>
</gene>
<evidence type="ECO:0000255" key="1">
    <source>
        <dbReference type="HAMAP-Rule" id="MF_01442"/>
    </source>
</evidence>
<accession>Q72X61</accession>
<organism>
    <name type="scientific">Bacillus cereus (strain ATCC 10987 / NRS 248)</name>
    <dbReference type="NCBI Taxonomy" id="222523"/>
    <lineage>
        <taxon>Bacteria</taxon>
        <taxon>Bacillati</taxon>
        <taxon>Bacillota</taxon>
        <taxon>Bacilli</taxon>
        <taxon>Bacillales</taxon>
        <taxon>Bacillaceae</taxon>
        <taxon>Bacillus</taxon>
        <taxon>Bacillus cereus group</taxon>
    </lineage>
</organism>
<protein>
    <recommendedName>
        <fullName evidence="1">Coproheme decarboxylase</fullName>
        <ecNumber evidence="1">1.3.98.5</ecNumber>
    </recommendedName>
    <alternativeName>
        <fullName evidence="1">Coproheme III oxidative decarboxylase</fullName>
    </alternativeName>
    <alternativeName>
        <fullName evidence="1">Hydrogen peroxide-dependent heme synthase</fullName>
    </alternativeName>
</protein>
<keyword id="KW-0349">Heme</keyword>
<keyword id="KW-0350">Heme biosynthesis</keyword>
<keyword id="KW-0408">Iron</keyword>
<keyword id="KW-0479">Metal-binding</keyword>
<keyword id="KW-0560">Oxidoreductase</keyword>
<proteinExistence type="inferred from homology"/>
<feature type="chain" id="PRO_0000294031" description="Coproheme decarboxylase">
    <location>
        <begin position="1"/>
        <end position="247"/>
    </location>
</feature>
<feature type="active site" evidence="1">
    <location>
        <position position="143"/>
    </location>
</feature>
<feature type="binding site" evidence="1">
    <location>
        <position position="129"/>
    </location>
    <ligand>
        <name>Fe-coproporphyrin III</name>
        <dbReference type="ChEBI" id="CHEBI:68438"/>
    </ligand>
</feature>
<feature type="binding site" evidence="1">
    <location>
        <begin position="143"/>
        <end position="147"/>
    </location>
    <ligand>
        <name>Fe-coproporphyrin III</name>
        <dbReference type="ChEBI" id="CHEBI:68438"/>
    </ligand>
</feature>
<feature type="binding site" description="axial binding residue" evidence="1">
    <location>
        <position position="170"/>
    </location>
    <ligand>
        <name>Fe-coproporphyrin III</name>
        <dbReference type="ChEBI" id="CHEBI:68438"/>
    </ligand>
    <ligandPart>
        <name>Fe</name>
        <dbReference type="ChEBI" id="CHEBI:18248"/>
    </ligandPart>
</feature>
<feature type="binding site" evidence="1">
    <location>
        <position position="183"/>
    </location>
    <ligand>
        <name>Fe-coproporphyrin III</name>
        <dbReference type="ChEBI" id="CHEBI:68438"/>
    </ligand>
</feature>
<feature type="binding site" evidence="1">
    <location>
        <position position="221"/>
    </location>
    <ligand>
        <name>Fe-coproporphyrin III</name>
        <dbReference type="ChEBI" id="CHEBI:68438"/>
    </ligand>
</feature>
<sequence>MSEATTTLDGWYCLHDLRSIDWAAWKTLSSDERGQAVSEFLNVVEKWNDVAATKKGSHAMYTVVGQKADIMLMILRPTMEELNEIETELNKTTLAEYMVPAYSYVSVVELSNYLPADEDPYQNPQILARLYPELPKANHICFYPMDKRRQGDDNWYMLPMEERKKMMYSHSKIGRQYAGKVRQVISGSVGFDDFEWGVTLFADDVLQFKKLIYEMRFDEVSARYGEFGTFFVGNILPDEKVEKFLHI</sequence>
<name>CHDC_BACC1</name>
<dbReference type="EC" id="1.3.98.5" evidence="1"/>
<dbReference type="EMBL" id="AE017194">
    <property type="protein sequence ID" value="AAS44417.1"/>
    <property type="molecule type" value="Genomic_DNA"/>
</dbReference>
<dbReference type="SMR" id="Q72X61"/>
<dbReference type="KEGG" id="bca:BCE_5517"/>
<dbReference type="HOGENOM" id="CLU_063226_1_0_9"/>
<dbReference type="UniPathway" id="UPA00252"/>
<dbReference type="Proteomes" id="UP000002527">
    <property type="component" value="Chromosome"/>
</dbReference>
<dbReference type="GO" id="GO:0020037">
    <property type="term" value="F:heme binding"/>
    <property type="evidence" value="ECO:0007669"/>
    <property type="project" value="InterPro"/>
</dbReference>
<dbReference type="GO" id="GO:0046872">
    <property type="term" value="F:metal ion binding"/>
    <property type="evidence" value="ECO:0007669"/>
    <property type="project" value="UniProtKB-KW"/>
</dbReference>
<dbReference type="GO" id="GO:0016634">
    <property type="term" value="F:oxidoreductase activity, acting on the CH-CH group of donors, oxygen as acceptor"/>
    <property type="evidence" value="ECO:0007669"/>
    <property type="project" value="UniProtKB-UniRule"/>
</dbReference>
<dbReference type="GO" id="GO:0004601">
    <property type="term" value="F:peroxidase activity"/>
    <property type="evidence" value="ECO:0007669"/>
    <property type="project" value="InterPro"/>
</dbReference>
<dbReference type="GO" id="GO:0006785">
    <property type="term" value="P:heme B biosynthetic process"/>
    <property type="evidence" value="ECO:0007669"/>
    <property type="project" value="UniProtKB-UniRule"/>
</dbReference>
<dbReference type="Gene3D" id="3.30.70.1030">
    <property type="entry name" value="Apc35880, domain 1"/>
    <property type="match status" value="2"/>
</dbReference>
<dbReference type="HAMAP" id="MF_01442">
    <property type="entry name" value="Coproheme_decarbox_1"/>
    <property type="match status" value="1"/>
</dbReference>
<dbReference type="InterPro" id="IPR031332">
    <property type="entry name" value="CHDC"/>
</dbReference>
<dbReference type="InterPro" id="IPR010644">
    <property type="entry name" value="ChdC/CLD"/>
</dbReference>
<dbReference type="InterPro" id="IPR011008">
    <property type="entry name" value="Dimeric_a/b-barrel"/>
</dbReference>
<dbReference type="NCBIfam" id="NF008913">
    <property type="entry name" value="PRK12276.1"/>
    <property type="match status" value="1"/>
</dbReference>
<dbReference type="PANTHER" id="PTHR36843:SF1">
    <property type="entry name" value="COPROHEME DECARBOXYLASE"/>
    <property type="match status" value="1"/>
</dbReference>
<dbReference type="PANTHER" id="PTHR36843">
    <property type="entry name" value="HEME-DEPENDENT PEROXIDASE YWFI-RELATED"/>
    <property type="match status" value="1"/>
</dbReference>
<dbReference type="Pfam" id="PF06778">
    <property type="entry name" value="Chlor_dismutase"/>
    <property type="match status" value="1"/>
</dbReference>
<dbReference type="SUPFAM" id="SSF54909">
    <property type="entry name" value="Dimeric alpha+beta barrel"/>
    <property type="match status" value="1"/>
</dbReference>
<reference key="1">
    <citation type="journal article" date="2004" name="Nucleic Acids Res.">
        <title>The genome sequence of Bacillus cereus ATCC 10987 reveals metabolic adaptations and a large plasmid related to Bacillus anthracis pXO1.</title>
        <authorList>
            <person name="Rasko D.A."/>
            <person name="Ravel J."/>
            <person name="Oekstad O.A."/>
            <person name="Helgason E."/>
            <person name="Cer R.Z."/>
            <person name="Jiang L."/>
            <person name="Shores K.A."/>
            <person name="Fouts D.E."/>
            <person name="Tourasse N.J."/>
            <person name="Angiuoli S.V."/>
            <person name="Kolonay J.F."/>
            <person name="Nelson W.C."/>
            <person name="Kolstoe A.-B."/>
            <person name="Fraser C.M."/>
            <person name="Read T.D."/>
        </authorList>
    </citation>
    <scope>NUCLEOTIDE SEQUENCE [LARGE SCALE GENOMIC DNA]</scope>
    <source>
        <strain>ATCC 10987 / NRS 248</strain>
    </source>
</reference>
<comment type="function">
    <text evidence="1">Involved in coproporphyrin-dependent heme b biosynthesis. Catalyzes the decarboxylation of Fe-coproporphyrin III (coproheme) to heme b (protoheme IX), the last step of the pathway. The reaction occurs in a stepwise manner with a three-propionate intermediate.</text>
</comment>
<comment type="catalytic activity">
    <reaction evidence="1">
        <text>Fe-coproporphyrin III + 2 H2O2 + 2 H(+) = heme b + 2 CO2 + 4 H2O</text>
        <dbReference type="Rhea" id="RHEA:56516"/>
        <dbReference type="ChEBI" id="CHEBI:15377"/>
        <dbReference type="ChEBI" id="CHEBI:15378"/>
        <dbReference type="ChEBI" id="CHEBI:16240"/>
        <dbReference type="ChEBI" id="CHEBI:16526"/>
        <dbReference type="ChEBI" id="CHEBI:60344"/>
        <dbReference type="ChEBI" id="CHEBI:68438"/>
        <dbReference type="EC" id="1.3.98.5"/>
    </reaction>
    <physiologicalReaction direction="left-to-right" evidence="1">
        <dbReference type="Rhea" id="RHEA:56517"/>
    </physiologicalReaction>
</comment>
<comment type="catalytic activity">
    <reaction evidence="1">
        <text>Fe-coproporphyrin III + H2O2 + H(+) = harderoheme III + CO2 + 2 H2O</text>
        <dbReference type="Rhea" id="RHEA:57940"/>
        <dbReference type="ChEBI" id="CHEBI:15377"/>
        <dbReference type="ChEBI" id="CHEBI:15378"/>
        <dbReference type="ChEBI" id="CHEBI:16240"/>
        <dbReference type="ChEBI" id="CHEBI:16526"/>
        <dbReference type="ChEBI" id="CHEBI:68438"/>
        <dbReference type="ChEBI" id="CHEBI:142463"/>
    </reaction>
    <physiologicalReaction direction="left-to-right" evidence="1">
        <dbReference type="Rhea" id="RHEA:57941"/>
    </physiologicalReaction>
</comment>
<comment type="catalytic activity">
    <reaction evidence="1">
        <text>harderoheme III + H2O2 + H(+) = heme b + CO2 + 2 H2O</text>
        <dbReference type="Rhea" id="RHEA:57944"/>
        <dbReference type="ChEBI" id="CHEBI:15377"/>
        <dbReference type="ChEBI" id="CHEBI:15378"/>
        <dbReference type="ChEBI" id="CHEBI:16240"/>
        <dbReference type="ChEBI" id="CHEBI:16526"/>
        <dbReference type="ChEBI" id="CHEBI:60344"/>
        <dbReference type="ChEBI" id="CHEBI:142463"/>
    </reaction>
    <physiologicalReaction direction="left-to-right" evidence="1">
        <dbReference type="Rhea" id="RHEA:57945"/>
    </physiologicalReaction>
</comment>
<comment type="cofactor">
    <cofactor evidence="1">
        <name>Fe-coproporphyrin III</name>
        <dbReference type="ChEBI" id="CHEBI:68438"/>
    </cofactor>
    <text evidence="1">Fe-coproporphyrin III acts both as a substrate and a redox cofactor.</text>
</comment>
<comment type="pathway">
    <text evidence="1">Porphyrin-containing compound metabolism; protoheme biosynthesis.</text>
</comment>
<comment type="similarity">
    <text evidence="1">Belongs to the ChdC family. Type 1 subfamily.</text>
</comment>